<proteinExistence type="evidence at protein level"/>
<name>CLC7A_HUMAN</name>
<gene>
    <name evidence="23" type="primary">CLEC7A</name>
    <name type="synonym">BGR</name>
    <name type="synonym">CLECSF12</name>
    <name evidence="17" type="synonym">DECTIN1</name>
    <name type="ORF">UNQ539/PRO1082</name>
</gene>
<protein>
    <recommendedName>
        <fullName>C-type lectin domain family 7 member A</fullName>
    </recommendedName>
    <alternativeName>
        <fullName evidence="16">Beta-glucan receptor</fullName>
    </alternativeName>
    <alternativeName>
        <fullName>C-type lectin superfamily member 12</fullName>
    </alternativeName>
    <alternativeName>
        <fullName evidence="17">Dendritic cell-associated C-type lectin 1</fullName>
        <shortName evidence="17">DC-associated C-type lectin 1</shortName>
        <shortName evidence="17">Dectin-1</shortName>
    </alternativeName>
    <cdAntigenName>CD369</cdAntigenName>
</protein>
<feature type="chain" id="PRO_0000269491" description="C-type lectin domain family 7 member A">
    <location>
        <begin position="1"/>
        <end position="247"/>
    </location>
</feature>
<feature type="topological domain" description="Cytoplasmic" evidence="2">
    <location>
        <begin position="1"/>
        <end position="44"/>
    </location>
</feature>
<feature type="transmembrane region" description="Helical; Signal-anchor for type II membrane protein" evidence="2">
    <location>
        <begin position="45"/>
        <end position="65"/>
    </location>
</feature>
<feature type="topological domain" description="Extracellular" evidence="2">
    <location>
        <begin position="66"/>
        <end position="247"/>
    </location>
</feature>
<feature type="domain" description="C-type lectin" evidence="3">
    <location>
        <begin position="127"/>
        <end position="242"/>
    </location>
</feature>
<feature type="short sequence motif" description="ITAM-like">
    <location>
        <begin position="15"/>
        <end position="18"/>
    </location>
</feature>
<feature type="binding site" evidence="1">
    <location>
        <begin position="146"/>
        <end position="153"/>
    </location>
    <ligand>
        <name>(1,3-beta-D-glucosyl)n</name>
        <dbReference type="ChEBI" id="CHEBI:37671"/>
    </ligand>
</feature>
<feature type="binding site" evidence="1">
    <location>
        <position position="157"/>
    </location>
    <ligand>
        <name>a divalent metal cation</name>
        <dbReference type="ChEBI" id="CHEBI:60240"/>
    </ligand>
</feature>
<feature type="binding site" evidence="1">
    <location>
        <position position="159"/>
    </location>
    <ligand>
        <name>a divalent metal cation</name>
        <dbReference type="ChEBI" id="CHEBI:60240"/>
    </ligand>
</feature>
<feature type="binding site" evidence="1">
    <location>
        <position position="163"/>
    </location>
    <ligand>
        <name>a divalent metal cation</name>
        <dbReference type="ChEBI" id="CHEBI:60240"/>
    </ligand>
</feature>
<feature type="binding site" evidence="1">
    <location>
        <position position="195"/>
    </location>
    <ligand>
        <name>(1,3-beta-D-glucosyl)n</name>
        <dbReference type="ChEBI" id="CHEBI:37671"/>
    </ligand>
</feature>
<feature type="binding site" evidence="1">
    <location>
        <position position="242"/>
    </location>
    <ligand>
        <name>a divalent metal cation</name>
        <dbReference type="ChEBI" id="CHEBI:60240"/>
    </ligand>
</feature>
<feature type="glycosylation site" description="N-linked (GlcNAc...) asparagine" evidence="2">
    <location>
        <position position="91"/>
    </location>
</feature>
<feature type="disulfide bond" evidence="3">
    <location>
        <begin position="120"/>
        <end position="131"/>
    </location>
</feature>
<feature type="disulfide bond" evidence="3">
    <location>
        <begin position="148"/>
        <end position="241"/>
    </location>
</feature>
<feature type="disulfide bond" evidence="3">
    <location>
        <begin position="220"/>
        <end position="233"/>
    </location>
</feature>
<feature type="splice variant" id="VSP_022048" description="In isoform 5." evidence="16 20">
    <location>
        <begin position="36"/>
        <end position="114"/>
    </location>
</feature>
<feature type="splice variant" id="VSP_022049" description="In isoform 8." evidence="16">
    <original>SCAASPPWRL</original>
    <variation>IYSKTSVFPT</variation>
    <location>
        <begin position="36"/>
        <end position="45"/>
    </location>
</feature>
<feature type="splice variant" id="VSP_022050" description="In isoform 8." evidence="16">
    <location>
        <begin position="46"/>
        <end position="247"/>
    </location>
</feature>
<feature type="splice variant" id="VSP_047589" description="In isoform 10." evidence="16">
    <original>AIWRSNSGSNTLENGYFLSRNKENHSQPTQSSLEDSVTPTKAVKTTGVL</original>
    <variation>GTGQFLKDLSFLNNRRKLFGDPIQEATHWRMATFYQEIKRTTVNPHNHL</variation>
    <location>
        <begin position="68"/>
        <end position="116"/>
    </location>
</feature>
<feature type="splice variant" id="VSP_022051" description="In isoform 2, isoform 6 and isoform 7." evidence="14 15 16 17 18 19 20 21">
    <location>
        <begin position="68"/>
        <end position="113"/>
    </location>
</feature>
<feature type="splice variant" id="VSP_043298" description="In isoform 9." evidence="21">
    <original>IWRSNSGSN</original>
    <variation>GFKAVEFKG</variation>
    <location>
        <begin position="69"/>
        <end position="77"/>
    </location>
</feature>
<feature type="splice variant" id="VSP_043299" description="In isoform 9." evidence="21">
    <location>
        <begin position="78"/>
        <end position="247"/>
    </location>
</feature>
<feature type="splice variant" id="VSP_047590" description="In isoform 10." evidence="16">
    <location>
        <begin position="117"/>
        <end position="247"/>
    </location>
</feature>
<feature type="splice variant" id="VSP_022052" description="In isoform 4." evidence="16">
    <original>GFIVKQVSSQPDNSFWIGLSRPQTEVPWLWED</original>
    <variation>SLTLLPKLECSEAATSQAQVILPPQLPE</variation>
    <location>
        <begin position="165"/>
        <end position="196"/>
    </location>
</feature>
<feature type="splice variant" id="VSP_022053" description="In isoform 3 and isoform 7." evidence="15 16 20">
    <original>GFIVKQVSSQPDNSFWIGLSRPQTE</original>
    <variation>ISDQNHSYPRKPISKLCMDSRVSHL</variation>
    <location>
        <begin position="165"/>
        <end position="189"/>
    </location>
</feature>
<feature type="splice variant" id="VSP_022054" description="In isoform 6." evidence="21">
    <original>GFIVKQVSSQPDNS</original>
    <variation>VSVDFCYDYLWCVS</variation>
    <location>
        <begin position="165"/>
        <end position="178"/>
    </location>
</feature>
<feature type="splice variant" id="VSP_022055" description="In isoform 6." evidence="21">
    <location>
        <begin position="179"/>
        <end position="247"/>
    </location>
</feature>
<feature type="splice variant" id="VSP_022056" description="In isoform 3 and isoform 7." evidence="15 16 20">
    <location>
        <begin position="190"/>
        <end position="247"/>
    </location>
</feature>
<feature type="splice variant" id="VSP_022057" description="In isoform 4." evidence="16">
    <location>
        <begin position="197"/>
        <end position="247"/>
    </location>
</feature>
<feature type="sequence variant" id="VAR_050111" description="In dbSNP:rs16910527.">
    <original>I</original>
    <variation>S</variation>
    <location>
        <position position="223"/>
    </location>
</feature>
<feature type="sequence variant" id="VAR_084643" description="Probable risk factor for invasive aspergillosis." evidence="13">
    <location>
        <begin position="238"/>
        <end position="247"/>
    </location>
</feature>
<feature type="sequence conflict" description="In Ref. 4; AAL11714." evidence="22" ref="4">
    <original>V</original>
    <variation>I</variation>
    <location>
        <position position="31"/>
    </location>
</feature>
<reference key="1">
    <citation type="journal article" date="2001" name="Eur. J. Immunol.">
        <title>A novel cluster of lectin-like receptor genes expressed in monocytic, dendritic and endothelial cells maps close to the NK receptor genes in the human NK gene complex.</title>
        <authorList>
            <person name="Sobanov Y."/>
            <person name="Bernreiter A."/>
            <person name="Derdak S."/>
            <person name="Mechtcheriakova D."/>
            <person name="Schweighofer B."/>
            <person name="Duechler M."/>
            <person name="Kalthoff F."/>
            <person name="Hofer E."/>
        </authorList>
    </citation>
    <scope>NUCLEOTIDE SEQUENCE [MRNA] (ISOFORMS 1 AND 2)</scope>
    <scope>SUBCELLULAR LOCATION</scope>
    <scope>TISSUE SPECIFICITY</scope>
</reference>
<reference key="2">
    <citation type="journal article" date="2001" name="Gene">
        <title>Identification of a human homologue of the dendritic cell-associated C-type lectin-1, dectin-1.</title>
        <authorList>
            <person name="Yokota K."/>
            <person name="Takashima A."/>
            <person name="Bergstresser P.R."/>
            <person name="Ariizumi K."/>
        </authorList>
    </citation>
    <scope>NUCLEOTIDE SEQUENCE [MRNA] (ISOFORMS 1 AND 2)</scope>
    <scope>TISSUE SPECIFICITY</scope>
    <source>
        <tissue>Peripheral blood leukocyte</tissue>
    </source>
</reference>
<reference key="3">
    <citation type="journal article" date="2001" name="Immunogenetics">
        <title>Cloning of human DECTIN-1, a novel C-type lectin-like receptor gene expressed on dendritic cells.</title>
        <authorList>
            <person name="Hermanz-Falcon P."/>
            <person name="Arce I."/>
            <person name="Roda-Navarro P."/>
            <person name="Fernandez-Ruiz E."/>
        </authorList>
    </citation>
    <scope>NUCLEOTIDE SEQUENCE [MRNA] (ISOFORMS 1; 2 AND 7)</scope>
    <scope>TISSUE SPECIFICITY</scope>
    <source>
        <tissue>Peripheral blood leukocyte</tissue>
    </source>
</reference>
<reference key="4">
    <citation type="journal article" date="2001" name="J. Biol. Chem.">
        <title>Characterization of the human beta-glucan receptor and its alternatively spliced isoforms.</title>
        <authorList>
            <person name="Willment J.A."/>
            <person name="Gordon S."/>
            <person name="Brown G.D."/>
        </authorList>
    </citation>
    <scope>NUCLEOTIDE SEQUENCE [MRNA] (ISOFORMS 1; 2; 3; 4; 5; 7; 8 AND 10)</scope>
    <scope>FUNCTION</scope>
    <scope>TISSUE SPECIFICITY</scope>
    <source>
        <tissue>Peripheral blood leukocyte</tissue>
    </source>
</reference>
<reference key="5">
    <citation type="journal article" date="2002" name="Exp. Hematol.">
        <title>Molecular and functional characterization of human Dectin-1.</title>
        <authorList>
            <person name="Gruenebach F."/>
            <person name="Weck M.M."/>
            <person name="Reichert J."/>
            <person name="Brossart P."/>
        </authorList>
    </citation>
    <scope>NUCLEOTIDE SEQUENCE [MRNA] (ISOFORM 2)</scope>
    <scope>FUNCTION</scope>
    <scope>INDUCTION</scope>
    <scope>TISSUE SPECIFICITY</scope>
    <source>
        <tissue>Dendritic cell</tissue>
    </source>
</reference>
<reference key="6">
    <citation type="journal article" date="2003" name="Genome Res.">
        <title>The secreted protein discovery initiative (SPDI), a large-scale effort to identify novel human secreted and transmembrane proteins: a bioinformatics assessment.</title>
        <authorList>
            <person name="Clark H.F."/>
            <person name="Gurney A.L."/>
            <person name="Abaya E."/>
            <person name="Baker K."/>
            <person name="Baldwin D.T."/>
            <person name="Brush J."/>
            <person name="Chen J."/>
            <person name="Chow B."/>
            <person name="Chui C."/>
            <person name="Crowley C."/>
            <person name="Currell B."/>
            <person name="Deuel B."/>
            <person name="Dowd P."/>
            <person name="Eaton D."/>
            <person name="Foster J.S."/>
            <person name="Grimaldi C."/>
            <person name="Gu Q."/>
            <person name="Hass P.E."/>
            <person name="Heldens S."/>
            <person name="Huang A."/>
            <person name="Kim H.S."/>
            <person name="Klimowski L."/>
            <person name="Jin Y."/>
            <person name="Johnson S."/>
            <person name="Lee J."/>
            <person name="Lewis L."/>
            <person name="Liao D."/>
            <person name="Mark M.R."/>
            <person name="Robbie E."/>
            <person name="Sanchez C."/>
            <person name="Schoenfeld J."/>
            <person name="Seshagiri S."/>
            <person name="Simmons L."/>
            <person name="Singh J."/>
            <person name="Smith V."/>
            <person name="Stinson J."/>
            <person name="Vagts A."/>
            <person name="Vandlen R.L."/>
            <person name="Watanabe C."/>
            <person name="Wieand D."/>
            <person name="Woods K."/>
            <person name="Xie M.-H."/>
            <person name="Yansura D.G."/>
            <person name="Yi S."/>
            <person name="Yu G."/>
            <person name="Yuan J."/>
            <person name="Zhang M."/>
            <person name="Zhang Z."/>
            <person name="Goddard A.D."/>
            <person name="Wood W.I."/>
            <person name="Godowski P.J."/>
            <person name="Gray A.M."/>
        </authorList>
    </citation>
    <scope>NUCLEOTIDE SEQUENCE [LARGE SCALE MRNA] (ISOFORM 2)</scope>
</reference>
<reference key="7">
    <citation type="journal article" date="2004" name="Nat. Genet.">
        <title>Complete sequencing and characterization of 21,243 full-length human cDNAs.</title>
        <authorList>
            <person name="Ota T."/>
            <person name="Suzuki Y."/>
            <person name="Nishikawa T."/>
            <person name="Otsuki T."/>
            <person name="Sugiyama T."/>
            <person name="Irie R."/>
            <person name="Wakamatsu A."/>
            <person name="Hayashi K."/>
            <person name="Sato H."/>
            <person name="Nagai K."/>
            <person name="Kimura K."/>
            <person name="Makita H."/>
            <person name="Sekine M."/>
            <person name="Obayashi M."/>
            <person name="Nishi T."/>
            <person name="Shibahara T."/>
            <person name="Tanaka T."/>
            <person name="Ishii S."/>
            <person name="Yamamoto J."/>
            <person name="Saito K."/>
            <person name="Kawai Y."/>
            <person name="Isono Y."/>
            <person name="Nakamura Y."/>
            <person name="Nagahari K."/>
            <person name="Murakami K."/>
            <person name="Yasuda T."/>
            <person name="Iwayanagi T."/>
            <person name="Wagatsuma M."/>
            <person name="Shiratori A."/>
            <person name="Sudo H."/>
            <person name="Hosoiri T."/>
            <person name="Kaku Y."/>
            <person name="Kodaira H."/>
            <person name="Kondo H."/>
            <person name="Sugawara M."/>
            <person name="Takahashi M."/>
            <person name="Kanda K."/>
            <person name="Yokoi T."/>
            <person name="Furuya T."/>
            <person name="Kikkawa E."/>
            <person name="Omura Y."/>
            <person name="Abe K."/>
            <person name="Kamihara K."/>
            <person name="Katsuta N."/>
            <person name="Sato K."/>
            <person name="Tanikawa M."/>
            <person name="Yamazaki M."/>
            <person name="Ninomiya K."/>
            <person name="Ishibashi T."/>
            <person name="Yamashita H."/>
            <person name="Murakawa K."/>
            <person name="Fujimori K."/>
            <person name="Tanai H."/>
            <person name="Kimata M."/>
            <person name="Watanabe M."/>
            <person name="Hiraoka S."/>
            <person name="Chiba Y."/>
            <person name="Ishida S."/>
            <person name="Ono Y."/>
            <person name="Takiguchi S."/>
            <person name="Watanabe S."/>
            <person name="Yosida M."/>
            <person name="Hotuta T."/>
            <person name="Kusano J."/>
            <person name="Kanehori K."/>
            <person name="Takahashi-Fujii A."/>
            <person name="Hara H."/>
            <person name="Tanase T.-O."/>
            <person name="Nomura Y."/>
            <person name="Togiya S."/>
            <person name="Komai F."/>
            <person name="Hara R."/>
            <person name="Takeuchi K."/>
            <person name="Arita M."/>
            <person name="Imose N."/>
            <person name="Musashino K."/>
            <person name="Yuuki H."/>
            <person name="Oshima A."/>
            <person name="Sasaki N."/>
            <person name="Aotsuka S."/>
            <person name="Yoshikawa Y."/>
            <person name="Matsunawa H."/>
            <person name="Ichihara T."/>
            <person name="Shiohata N."/>
            <person name="Sano S."/>
            <person name="Moriya S."/>
            <person name="Momiyama H."/>
            <person name="Satoh N."/>
            <person name="Takami S."/>
            <person name="Terashima Y."/>
            <person name="Suzuki O."/>
            <person name="Nakagawa S."/>
            <person name="Senoh A."/>
            <person name="Mizoguchi H."/>
            <person name="Goto Y."/>
            <person name="Shimizu F."/>
            <person name="Wakebe H."/>
            <person name="Hishigaki H."/>
            <person name="Watanabe T."/>
            <person name="Sugiyama A."/>
            <person name="Takemoto M."/>
            <person name="Kawakami B."/>
            <person name="Yamazaki M."/>
            <person name="Watanabe K."/>
            <person name="Kumagai A."/>
            <person name="Itakura S."/>
            <person name="Fukuzumi Y."/>
            <person name="Fujimori Y."/>
            <person name="Komiyama M."/>
            <person name="Tashiro H."/>
            <person name="Tanigami A."/>
            <person name="Fujiwara T."/>
            <person name="Ono T."/>
            <person name="Yamada K."/>
            <person name="Fujii Y."/>
            <person name="Ozaki K."/>
            <person name="Hirao M."/>
            <person name="Ohmori Y."/>
            <person name="Kawabata A."/>
            <person name="Hikiji T."/>
            <person name="Kobatake N."/>
            <person name="Inagaki H."/>
            <person name="Ikema Y."/>
            <person name="Okamoto S."/>
            <person name="Okitani R."/>
            <person name="Kawakami T."/>
            <person name="Noguchi S."/>
            <person name="Itoh T."/>
            <person name="Shigeta K."/>
            <person name="Senba T."/>
            <person name="Matsumura K."/>
            <person name="Nakajima Y."/>
            <person name="Mizuno T."/>
            <person name="Morinaga M."/>
            <person name="Sasaki M."/>
            <person name="Togashi T."/>
            <person name="Oyama M."/>
            <person name="Hata H."/>
            <person name="Watanabe M."/>
            <person name="Komatsu T."/>
            <person name="Mizushima-Sugano J."/>
            <person name="Satoh T."/>
            <person name="Shirai Y."/>
            <person name="Takahashi Y."/>
            <person name="Nakagawa K."/>
            <person name="Okumura K."/>
            <person name="Nagase T."/>
            <person name="Nomura N."/>
            <person name="Kikuchi H."/>
            <person name="Masuho Y."/>
            <person name="Yamashita R."/>
            <person name="Nakai K."/>
            <person name="Yada T."/>
            <person name="Nakamura Y."/>
            <person name="Ohara O."/>
            <person name="Isogai T."/>
            <person name="Sugano S."/>
        </authorList>
    </citation>
    <scope>NUCLEOTIDE SEQUENCE [LARGE SCALE MRNA] (ISOFORMS 1; 2; 5 AND 7)</scope>
    <source>
        <tissue>Umbilical cord blood</tissue>
    </source>
</reference>
<reference key="8">
    <citation type="journal article" date="2006" name="Nature">
        <title>The finished DNA sequence of human chromosome 12.</title>
        <authorList>
            <person name="Scherer S.E."/>
            <person name="Muzny D.M."/>
            <person name="Buhay C.J."/>
            <person name="Chen R."/>
            <person name="Cree A."/>
            <person name="Ding Y."/>
            <person name="Dugan-Rocha S."/>
            <person name="Gill R."/>
            <person name="Gunaratne P."/>
            <person name="Harris R.A."/>
            <person name="Hawes A.C."/>
            <person name="Hernandez J."/>
            <person name="Hodgson A.V."/>
            <person name="Hume J."/>
            <person name="Jackson A."/>
            <person name="Khan Z.M."/>
            <person name="Kovar-Smith C."/>
            <person name="Lewis L.R."/>
            <person name="Lozado R.J."/>
            <person name="Metzker M.L."/>
            <person name="Milosavljevic A."/>
            <person name="Miner G.R."/>
            <person name="Montgomery K.T."/>
            <person name="Morgan M.B."/>
            <person name="Nazareth L.V."/>
            <person name="Scott G."/>
            <person name="Sodergren E."/>
            <person name="Song X.-Z."/>
            <person name="Steffen D."/>
            <person name="Lovering R.C."/>
            <person name="Wheeler D.A."/>
            <person name="Worley K.C."/>
            <person name="Yuan Y."/>
            <person name="Zhang Z."/>
            <person name="Adams C.Q."/>
            <person name="Ansari-Lari M.A."/>
            <person name="Ayele M."/>
            <person name="Brown M.J."/>
            <person name="Chen G."/>
            <person name="Chen Z."/>
            <person name="Clerc-Blankenburg K.P."/>
            <person name="Davis C."/>
            <person name="Delgado O."/>
            <person name="Dinh H.H."/>
            <person name="Draper H."/>
            <person name="Gonzalez-Garay M.L."/>
            <person name="Havlak P."/>
            <person name="Jackson L.R."/>
            <person name="Jacob L.S."/>
            <person name="Kelly S.H."/>
            <person name="Li L."/>
            <person name="Li Z."/>
            <person name="Liu J."/>
            <person name="Liu W."/>
            <person name="Lu J."/>
            <person name="Maheshwari M."/>
            <person name="Nguyen B.-V."/>
            <person name="Okwuonu G.O."/>
            <person name="Pasternak S."/>
            <person name="Perez L.M."/>
            <person name="Plopper F.J.H."/>
            <person name="Santibanez J."/>
            <person name="Shen H."/>
            <person name="Tabor P.E."/>
            <person name="Verduzco D."/>
            <person name="Waldron L."/>
            <person name="Wang Q."/>
            <person name="Williams G.A."/>
            <person name="Zhang J."/>
            <person name="Zhou J."/>
            <person name="Allen C.C."/>
            <person name="Amin A.G."/>
            <person name="Anyalebechi V."/>
            <person name="Bailey M."/>
            <person name="Barbaria J.A."/>
            <person name="Bimage K.E."/>
            <person name="Bryant N.P."/>
            <person name="Burch P.E."/>
            <person name="Burkett C.E."/>
            <person name="Burrell K.L."/>
            <person name="Calderon E."/>
            <person name="Cardenas V."/>
            <person name="Carter K."/>
            <person name="Casias K."/>
            <person name="Cavazos I."/>
            <person name="Cavazos S.R."/>
            <person name="Ceasar H."/>
            <person name="Chacko J."/>
            <person name="Chan S.N."/>
            <person name="Chavez D."/>
            <person name="Christopoulos C."/>
            <person name="Chu J."/>
            <person name="Cockrell R."/>
            <person name="Cox C.D."/>
            <person name="Dang M."/>
            <person name="Dathorne S.R."/>
            <person name="David R."/>
            <person name="Davis C.M."/>
            <person name="Davy-Carroll L."/>
            <person name="Deshazo D.R."/>
            <person name="Donlin J.E."/>
            <person name="D'Souza L."/>
            <person name="Eaves K.A."/>
            <person name="Egan A."/>
            <person name="Emery-Cohen A.J."/>
            <person name="Escotto M."/>
            <person name="Flagg N."/>
            <person name="Forbes L.D."/>
            <person name="Gabisi A.M."/>
            <person name="Garza M."/>
            <person name="Hamilton C."/>
            <person name="Henderson N."/>
            <person name="Hernandez O."/>
            <person name="Hines S."/>
            <person name="Hogues M.E."/>
            <person name="Huang M."/>
            <person name="Idlebird D.G."/>
            <person name="Johnson R."/>
            <person name="Jolivet A."/>
            <person name="Jones S."/>
            <person name="Kagan R."/>
            <person name="King L.M."/>
            <person name="Leal B."/>
            <person name="Lebow H."/>
            <person name="Lee S."/>
            <person name="LeVan J.M."/>
            <person name="Lewis L.C."/>
            <person name="London P."/>
            <person name="Lorensuhewa L.M."/>
            <person name="Loulseged H."/>
            <person name="Lovett D.A."/>
            <person name="Lucier A."/>
            <person name="Lucier R.L."/>
            <person name="Ma J."/>
            <person name="Madu R.C."/>
            <person name="Mapua P."/>
            <person name="Martindale A.D."/>
            <person name="Martinez E."/>
            <person name="Massey E."/>
            <person name="Mawhiney S."/>
            <person name="Meador M.G."/>
            <person name="Mendez S."/>
            <person name="Mercado C."/>
            <person name="Mercado I.C."/>
            <person name="Merritt C.E."/>
            <person name="Miner Z.L."/>
            <person name="Minja E."/>
            <person name="Mitchell T."/>
            <person name="Mohabbat F."/>
            <person name="Mohabbat K."/>
            <person name="Montgomery B."/>
            <person name="Moore N."/>
            <person name="Morris S."/>
            <person name="Munidasa M."/>
            <person name="Ngo R.N."/>
            <person name="Nguyen N.B."/>
            <person name="Nickerson E."/>
            <person name="Nwaokelemeh O.O."/>
            <person name="Nwokenkwo S."/>
            <person name="Obregon M."/>
            <person name="Oguh M."/>
            <person name="Oragunye N."/>
            <person name="Oviedo R.J."/>
            <person name="Parish B.J."/>
            <person name="Parker D.N."/>
            <person name="Parrish J."/>
            <person name="Parks K.L."/>
            <person name="Paul H.A."/>
            <person name="Payton B.A."/>
            <person name="Perez A."/>
            <person name="Perrin W."/>
            <person name="Pickens A."/>
            <person name="Primus E.L."/>
            <person name="Pu L.-L."/>
            <person name="Puazo M."/>
            <person name="Quiles M.M."/>
            <person name="Quiroz J.B."/>
            <person name="Rabata D."/>
            <person name="Reeves K."/>
            <person name="Ruiz S.J."/>
            <person name="Shao H."/>
            <person name="Sisson I."/>
            <person name="Sonaike T."/>
            <person name="Sorelle R.P."/>
            <person name="Sutton A.E."/>
            <person name="Svatek A.F."/>
            <person name="Svetz L.A."/>
            <person name="Tamerisa K.S."/>
            <person name="Taylor T.R."/>
            <person name="Teague B."/>
            <person name="Thomas N."/>
            <person name="Thorn R.D."/>
            <person name="Trejos Z.Y."/>
            <person name="Trevino B.K."/>
            <person name="Ukegbu O.N."/>
            <person name="Urban J.B."/>
            <person name="Vasquez L.I."/>
            <person name="Vera V.A."/>
            <person name="Villasana D.M."/>
            <person name="Wang L."/>
            <person name="Ward-Moore S."/>
            <person name="Warren J.T."/>
            <person name="Wei X."/>
            <person name="White F."/>
            <person name="Williamson A.L."/>
            <person name="Wleczyk R."/>
            <person name="Wooden H.S."/>
            <person name="Wooden S.H."/>
            <person name="Yen J."/>
            <person name="Yoon L."/>
            <person name="Yoon V."/>
            <person name="Zorrilla S.E."/>
            <person name="Nelson D."/>
            <person name="Kucherlapati R."/>
            <person name="Weinstock G."/>
            <person name="Gibbs R.A."/>
        </authorList>
    </citation>
    <scope>NUCLEOTIDE SEQUENCE [LARGE SCALE GENOMIC DNA]</scope>
</reference>
<reference key="9">
    <citation type="submission" date="2005-07" db="EMBL/GenBank/DDBJ databases">
        <authorList>
            <person name="Mural R.J."/>
            <person name="Istrail S."/>
            <person name="Sutton G.G."/>
            <person name="Florea L."/>
            <person name="Halpern A.L."/>
            <person name="Mobarry C.M."/>
            <person name="Lippert R."/>
            <person name="Walenz B."/>
            <person name="Shatkay H."/>
            <person name="Dew I."/>
            <person name="Miller J.R."/>
            <person name="Flanigan M.J."/>
            <person name="Edwards N.J."/>
            <person name="Bolanos R."/>
            <person name="Fasulo D."/>
            <person name="Halldorsson B.V."/>
            <person name="Hannenhalli S."/>
            <person name="Turner R."/>
            <person name="Yooseph S."/>
            <person name="Lu F."/>
            <person name="Nusskern D.R."/>
            <person name="Shue B.C."/>
            <person name="Zheng X.H."/>
            <person name="Zhong F."/>
            <person name="Delcher A.L."/>
            <person name="Huson D.H."/>
            <person name="Kravitz S.A."/>
            <person name="Mouchard L."/>
            <person name="Reinert K."/>
            <person name="Remington K.A."/>
            <person name="Clark A.G."/>
            <person name="Waterman M.S."/>
            <person name="Eichler E.E."/>
            <person name="Adams M.D."/>
            <person name="Hunkapiller M.W."/>
            <person name="Myers E.W."/>
            <person name="Venter J.C."/>
        </authorList>
    </citation>
    <scope>NUCLEOTIDE SEQUENCE [LARGE SCALE GENOMIC DNA]</scope>
</reference>
<reference key="10">
    <citation type="journal article" date="2004" name="Genome Res.">
        <title>The status, quality, and expansion of the NIH full-length cDNA project: the Mammalian Gene Collection (MGC).</title>
        <authorList>
            <consortium name="The MGC Project Team"/>
        </authorList>
    </citation>
    <scope>NUCLEOTIDE SEQUENCE [LARGE SCALE MRNA] (ISOFORMS 6 AND 9)</scope>
    <source>
        <tissue>Colon</tissue>
        <tissue>Lung</tissue>
        <tissue>Urinary bladder</tissue>
    </source>
</reference>
<reference key="11">
    <citation type="journal article" date="2006" name="Biochem. Biophys. Res. Commun.">
        <title>Human Dectin-1 isoform E is a cytoplasmic protein and interacts with RanBPM.</title>
        <authorList>
            <person name="Xie J."/>
            <person name="Sun M."/>
            <person name="Guo L."/>
            <person name="Liu W."/>
            <person name="Jiang J."/>
            <person name="Chen X."/>
            <person name="Zhou L."/>
            <person name="Gu J."/>
        </authorList>
    </citation>
    <scope>INTERACTION WITH RANBP9</scope>
    <scope>SUBCELLULAR LOCATION</scope>
</reference>
<reference key="12">
    <citation type="journal article" date="2007" name="Eur. J. Immunol.">
        <title>Dectin-1 promotes fungicidal activity of human neutrophils.</title>
        <authorList>
            <person name="Kennedy A.D."/>
            <person name="Willment J.A."/>
            <person name="Dorward D.W."/>
            <person name="Williams D.L."/>
            <person name="Brown G.D."/>
            <person name="DeLeo F.R."/>
        </authorList>
    </citation>
    <scope>FUNCTION</scope>
    <scope>SUBCELLULAR LOCATION</scope>
</reference>
<reference key="13">
    <citation type="journal article" date="2007" name="J. Immunol.">
        <title>Dectin-1 interaction with tetraspanin CD37 inhibits IL-6 production.</title>
        <authorList>
            <person name="Meyer-Wentrup F."/>
            <person name="Figdor C.G."/>
            <person name="Ansems M."/>
            <person name="Brossart P."/>
            <person name="Wright M.D."/>
            <person name="Adema G.J."/>
            <person name="van Spriel A.B."/>
        </authorList>
    </citation>
    <scope>INTERACTION WITH CD37</scope>
    <scope>SUBCELLULAR LOCATION</scope>
</reference>
<reference key="14">
    <citation type="journal article" date="2009" name="N. Engl. J. Med.">
        <title>Human dectin-1 deficiency and mucocutaneous fungal infections.</title>
        <authorList>
            <person name="Ferwerda B."/>
            <person name="Ferwerda G."/>
            <person name="Plantinga T.S."/>
            <person name="Willment J.A."/>
            <person name="van Spriel A.B."/>
            <person name="Venselaar H."/>
            <person name="Elbers C.C."/>
            <person name="Johnson M.D."/>
            <person name="Cambi A."/>
            <person name="Huysamen C."/>
            <person name="Jacobs L."/>
            <person name="Jansen T."/>
            <person name="Verheijen K."/>
            <person name="Masthoff L."/>
            <person name="Morre S.A."/>
            <person name="Vriend G."/>
            <person name="Williams D.L."/>
            <person name="Perfect J.R."/>
            <person name="Joosten L.A."/>
            <person name="Wijmenga C."/>
            <person name="van der Meer J.W."/>
            <person name="Adema G.J."/>
            <person name="Kullberg B.J."/>
            <person name="Brown G.D."/>
            <person name="Netea M.G."/>
        </authorList>
    </citation>
    <scope>INVOLVEMENT IN CANDF4</scope>
</reference>
<reference key="15">
    <citation type="journal article" date="2010" name="Blood">
        <title>Dectin-1 Y238X polymorphism associates with susceptibility to invasive aspergillosis in hematopoietic transplantation through impairment of both recipient- and donor-dependent mechanisms of antifungal immunity.</title>
        <authorList>
            <person name="Cunha C."/>
            <person name="Di Ianni M."/>
            <person name="Bozza S."/>
            <person name="Giovannini G."/>
            <person name="Zagarella S."/>
            <person name="Zelante T."/>
            <person name="D'Angelo C."/>
            <person name="Pierini A."/>
            <person name="Pitzurra L."/>
            <person name="Falzetti F."/>
            <person name="Carotti A."/>
            <person name="Perruccio K."/>
            <person name="Latge J.P."/>
            <person name="Rodrigues F."/>
            <person name="Velardi A."/>
            <person name="Aversa F."/>
            <person name="Romani L."/>
            <person name="Carvalho A."/>
        </authorList>
    </citation>
    <scope>POLYMORPHISM</scope>
    <scope>VARIANT 238-TYR--MET-247 DEL</scope>
</reference>
<accession>Q9BXN2</accession>
<accession>B2R861</accession>
<accession>B7Z494</accession>
<accession>B7Z5A9</accession>
<accession>B7Z5B9</accession>
<accession>Q6IPS7</accession>
<accession>Q96D32</accession>
<accession>Q96DR9</accession>
<accession>Q96LD3</accession>
<accession>Q96PA4</accession>
<accession>Q96PA5</accession>
<accession>Q96PA6</accession>
<accession>Q96PA7</accession>
<accession>Q96PA8</accession>
<accession>Q9H1K3</accession>
<sequence>MEYHPDLENLDEDGYTQLHFDSQSNTRIAVVSEKGSCAASPPWRLIAVILGILCLVILVIAVVLGTMAIWRSNSGSNTLENGYFLSRNKENHSQPTQSSLEDSVTPTKAVKTTGVLSSPCPPNWIIYEKSCYLFSMSLNSWDGSKRQCWQLGSNLLKIDSSNELGFIVKQVSSQPDNSFWIGLSRPQTEVPWLWEDGSTFSSNLFQIRTTATQENPSPNCVWIHVSVIYDQLCSVPSYSICEKKFSM</sequence>
<dbReference type="EMBL" id="AY026769">
    <property type="protein sequence ID" value="AAK20114.2"/>
    <property type="molecule type" value="mRNA"/>
</dbReference>
<dbReference type="EMBL" id="AY026770">
    <property type="protein sequence ID" value="AAK20115.1"/>
    <property type="molecule type" value="mRNA"/>
</dbReference>
<dbReference type="EMBL" id="AY026771">
    <property type="protein sequence ID" value="AAK20116.1"/>
    <property type="molecule type" value="mRNA"/>
</dbReference>
<dbReference type="EMBL" id="AF313468">
    <property type="protein sequence ID" value="AAK37473.1"/>
    <property type="molecule type" value="mRNA"/>
</dbReference>
<dbReference type="EMBL" id="AF313469">
    <property type="protein sequence ID" value="AAK37474.1"/>
    <property type="molecule type" value="mRNA"/>
</dbReference>
<dbReference type="EMBL" id="AF400595">
    <property type="protein sequence ID" value="AAL11711.1"/>
    <property type="molecule type" value="mRNA"/>
</dbReference>
<dbReference type="EMBL" id="AF400596">
    <property type="protein sequence ID" value="AAL11712.1"/>
    <property type="molecule type" value="mRNA"/>
</dbReference>
<dbReference type="EMBL" id="AF400597">
    <property type="protein sequence ID" value="AAL11713.1"/>
    <property type="molecule type" value="mRNA"/>
</dbReference>
<dbReference type="EMBL" id="AF400598">
    <property type="protein sequence ID" value="AAL11714.1"/>
    <property type="molecule type" value="mRNA"/>
</dbReference>
<dbReference type="EMBL" id="AF400599">
    <property type="protein sequence ID" value="AAL11715.1"/>
    <property type="molecule type" value="mRNA"/>
</dbReference>
<dbReference type="EMBL" id="AF400600">
    <property type="protein sequence ID" value="AAL11716.1"/>
    <property type="molecule type" value="mRNA"/>
</dbReference>
<dbReference type="EMBL" id="AF400601">
    <property type="protein sequence ID" value="AAL11717.1"/>
    <property type="molecule type" value="mRNA"/>
</dbReference>
<dbReference type="EMBL" id="AF400602">
    <property type="protein sequence ID" value="AAL11718.1"/>
    <property type="molecule type" value="mRNA"/>
</dbReference>
<dbReference type="EMBL" id="AJ312372">
    <property type="protein sequence ID" value="CAC43846.1"/>
    <property type="molecule type" value="mRNA"/>
</dbReference>
<dbReference type="EMBL" id="AJ312373">
    <property type="protein sequence ID" value="CAC43847.1"/>
    <property type="molecule type" value="mRNA"/>
</dbReference>
<dbReference type="EMBL" id="AY009090">
    <property type="protein sequence ID" value="AAG33923.2"/>
    <property type="molecule type" value="mRNA"/>
</dbReference>
<dbReference type="EMBL" id="AY359002">
    <property type="protein sequence ID" value="AAQ89361.1"/>
    <property type="molecule type" value="mRNA"/>
</dbReference>
<dbReference type="EMBL" id="AK297028">
    <property type="protein sequence ID" value="BAH12480.1"/>
    <property type="molecule type" value="mRNA"/>
</dbReference>
<dbReference type="EMBL" id="AK298679">
    <property type="protein sequence ID" value="BAH12845.1"/>
    <property type="molecule type" value="mRNA"/>
</dbReference>
<dbReference type="EMBL" id="AK298724">
    <property type="protein sequence ID" value="BAH12855.1"/>
    <property type="molecule type" value="mRNA"/>
</dbReference>
<dbReference type="EMBL" id="AK313247">
    <property type="protein sequence ID" value="BAG36058.1"/>
    <property type="molecule type" value="mRNA"/>
</dbReference>
<dbReference type="EMBL" id="AC024224">
    <property type="status" value="NOT_ANNOTATED_CDS"/>
    <property type="molecule type" value="Genomic_DNA"/>
</dbReference>
<dbReference type="EMBL" id="CH471094">
    <property type="protein sequence ID" value="EAW96144.1"/>
    <property type="molecule type" value="Genomic_DNA"/>
</dbReference>
<dbReference type="EMBL" id="CH471094">
    <property type="protein sequence ID" value="EAW96145.1"/>
    <property type="molecule type" value="Genomic_DNA"/>
</dbReference>
<dbReference type="EMBL" id="CH471094">
    <property type="protein sequence ID" value="EAW96146.1"/>
    <property type="molecule type" value="Genomic_DNA"/>
</dbReference>
<dbReference type="EMBL" id="CH471094">
    <property type="protein sequence ID" value="EAW96150.1"/>
    <property type="molecule type" value="Genomic_DNA"/>
</dbReference>
<dbReference type="EMBL" id="CH471094">
    <property type="protein sequence ID" value="EAW96154.1"/>
    <property type="molecule type" value="Genomic_DNA"/>
</dbReference>
<dbReference type="EMBL" id="BC013385">
    <property type="protein sequence ID" value="AAH13385.1"/>
    <property type="molecule type" value="mRNA"/>
</dbReference>
<dbReference type="EMBL" id="BC071746">
    <property type="protein sequence ID" value="AAH71746.1"/>
    <property type="molecule type" value="mRNA"/>
</dbReference>
<dbReference type="EMBL" id="BC093829">
    <property type="protein sequence ID" value="AAH93829.1"/>
    <property type="molecule type" value="mRNA"/>
</dbReference>
<dbReference type="EMBL" id="BC093831">
    <property type="protein sequence ID" value="AAH93831.1"/>
    <property type="molecule type" value="mRNA"/>
</dbReference>
<dbReference type="CCDS" id="CCDS41753.1">
    <molecule id="Q9BXN2-1"/>
</dbReference>
<dbReference type="CCDS" id="CCDS41754.1">
    <molecule id="Q9BXN2-3"/>
</dbReference>
<dbReference type="CCDS" id="CCDS53744.1">
    <molecule id="Q9BXN2-7"/>
</dbReference>
<dbReference type="CCDS" id="CCDS8613.1">
    <molecule id="Q9BXN2-2"/>
</dbReference>
<dbReference type="CCDS" id="CCDS8614.1">
    <molecule id="Q9BXN2-5"/>
</dbReference>
<dbReference type="CCDS" id="CCDS8617.1">
    <molecule id="Q9BXN2-9"/>
</dbReference>
<dbReference type="RefSeq" id="NP_072092.2">
    <molecule id="Q9BXN2-2"/>
    <property type="nucleotide sequence ID" value="NM_022570.4"/>
</dbReference>
<dbReference type="RefSeq" id="NP_922938.1">
    <molecule id="Q9BXN2-1"/>
    <property type="nucleotide sequence ID" value="NM_197947.3"/>
</dbReference>
<dbReference type="RefSeq" id="NP_922939.1">
    <molecule id="Q9BXN2-3"/>
    <property type="nucleotide sequence ID" value="NM_197948.3"/>
</dbReference>
<dbReference type="RefSeq" id="NP_922940.1">
    <molecule id="Q9BXN2-7"/>
    <property type="nucleotide sequence ID" value="NM_197949.3"/>
</dbReference>
<dbReference type="RefSeq" id="NP_922941.1">
    <molecule id="Q9BXN2-5"/>
    <property type="nucleotide sequence ID" value="NM_197950.3"/>
</dbReference>
<dbReference type="RefSeq" id="NP_922945.1">
    <molecule id="Q9BXN2-9"/>
    <property type="nucleotide sequence ID" value="NM_197954.3"/>
</dbReference>
<dbReference type="RefSeq" id="XP_006719198.1">
    <molecule id="Q9BXN2-4"/>
    <property type="nucleotide sequence ID" value="XM_006719135.4"/>
</dbReference>
<dbReference type="RefSeq" id="XP_047285315.1">
    <molecule id="Q9BXN2-1"/>
    <property type="nucleotide sequence ID" value="XM_047429359.1"/>
</dbReference>
<dbReference type="RefSeq" id="XP_054228878.1">
    <molecule id="Q9BXN2-1"/>
    <property type="nucleotide sequence ID" value="XM_054372903.1"/>
</dbReference>
<dbReference type="RefSeq" id="XP_054228879.1">
    <molecule id="Q9BXN2-4"/>
    <property type="nucleotide sequence ID" value="XM_054372904.1"/>
</dbReference>
<dbReference type="SMR" id="Q9BXN2"/>
<dbReference type="BioGRID" id="122206">
    <property type="interactions" value="53"/>
</dbReference>
<dbReference type="DIP" id="DIP-61730N"/>
<dbReference type="FunCoup" id="Q9BXN2">
    <property type="interactions" value="341"/>
</dbReference>
<dbReference type="IntAct" id="Q9BXN2">
    <property type="interactions" value="52"/>
</dbReference>
<dbReference type="MINT" id="Q9BXN2"/>
<dbReference type="STRING" id="9606.ENSP00000302569"/>
<dbReference type="ChEMBL" id="CHEMBL2034810"/>
<dbReference type="GlyCosmos" id="Q9BXN2">
    <property type="glycosylation" value="2 sites, 1 glycan"/>
</dbReference>
<dbReference type="GlyGen" id="Q9BXN2">
    <property type="glycosylation" value="3 sites, 2 O-linked glycans (2 sites)"/>
</dbReference>
<dbReference type="iPTMnet" id="Q9BXN2"/>
<dbReference type="PhosphoSitePlus" id="Q9BXN2"/>
<dbReference type="BioMuta" id="CLEC7A"/>
<dbReference type="DMDM" id="74752433"/>
<dbReference type="MassIVE" id="Q9BXN2"/>
<dbReference type="PaxDb" id="9606-ENSP00000302569"/>
<dbReference type="PeptideAtlas" id="Q9BXN2"/>
<dbReference type="ProteomicsDB" id="79462">
    <molecule id="Q9BXN2-1"/>
</dbReference>
<dbReference type="ProteomicsDB" id="79463">
    <molecule id="Q9BXN2-2"/>
</dbReference>
<dbReference type="ProteomicsDB" id="79466">
    <molecule id="Q9BXN2-5"/>
</dbReference>
<dbReference type="ABCD" id="Q9BXN2">
    <property type="antibodies" value="1 sequenced antibody"/>
</dbReference>
<dbReference type="Antibodypedia" id="23238">
    <property type="antibodies" value="716 antibodies from 38 providers"/>
</dbReference>
<dbReference type="DNASU" id="64581"/>
<dbReference type="Ensembl" id="ENST00000298523.9">
    <molecule id="Q9BXN2-7"/>
    <property type="protein sequence ID" value="ENSP00000298523.5"/>
    <property type="gene ID" value="ENSG00000172243.18"/>
</dbReference>
<dbReference type="Ensembl" id="ENST00000304084.13">
    <molecule id="Q9BXN2-1"/>
    <property type="protein sequence ID" value="ENSP00000302569.8"/>
    <property type="gene ID" value="ENSG00000172243.18"/>
</dbReference>
<dbReference type="Ensembl" id="ENST00000310002.4">
    <molecule id="Q9BXN2-9"/>
    <property type="protein sequence ID" value="ENSP00000312089.4"/>
    <property type="gene ID" value="ENSG00000172243.18"/>
</dbReference>
<dbReference type="Ensembl" id="ENST00000349926.9">
    <molecule id="Q9BXN2-8"/>
    <property type="protein sequence ID" value="ENSP00000344723.5"/>
    <property type="gene ID" value="ENSG00000172243.18"/>
</dbReference>
<dbReference type="Ensembl" id="ENST00000353231.9">
    <molecule id="Q9BXN2-2"/>
    <property type="protein sequence ID" value="ENSP00000266456.6"/>
    <property type="gene ID" value="ENSG00000172243.18"/>
</dbReference>
<dbReference type="Ensembl" id="ENST00000396484.6">
    <molecule id="Q9BXN2-5"/>
    <property type="protein sequence ID" value="ENSP00000379743.2"/>
    <property type="gene ID" value="ENSG00000172243.18"/>
</dbReference>
<dbReference type="Ensembl" id="ENST00000465100.5">
    <molecule id="Q9BXN2-10"/>
    <property type="protein sequence ID" value="ENSP00000436923.1"/>
    <property type="gene ID" value="ENSG00000172243.18"/>
</dbReference>
<dbReference type="Ensembl" id="ENST00000529761.5">
    <molecule id="Q9BXN2-1"/>
    <property type="protein sequence ID" value="ENSP00000432876.1"/>
    <property type="gene ID" value="ENSG00000172243.18"/>
</dbReference>
<dbReference type="Ensembl" id="ENST00000531192.5">
    <molecule id="Q9BXN2-4"/>
    <property type="protein sequence ID" value="ENSP00000434392.1"/>
    <property type="gene ID" value="ENSG00000172243.18"/>
</dbReference>
<dbReference type="Ensembl" id="ENST00000533022.5">
    <molecule id="Q9BXN2-3"/>
    <property type="protein sequence ID" value="ENSP00000431461.1"/>
    <property type="gene ID" value="ENSG00000172243.18"/>
</dbReference>
<dbReference type="GeneID" id="64581"/>
<dbReference type="KEGG" id="hsa:64581"/>
<dbReference type="MANE-Select" id="ENST00000304084.13">
    <property type="protein sequence ID" value="ENSP00000302569.8"/>
    <property type="RefSeq nucleotide sequence ID" value="NM_197947.3"/>
    <property type="RefSeq protein sequence ID" value="NP_922938.1"/>
</dbReference>
<dbReference type="UCSC" id="uc001qxe.5">
    <molecule id="Q9BXN2-1"/>
    <property type="organism name" value="human"/>
</dbReference>
<dbReference type="AGR" id="HGNC:14558"/>
<dbReference type="CTD" id="64581"/>
<dbReference type="DisGeNET" id="64581"/>
<dbReference type="GeneCards" id="CLEC7A"/>
<dbReference type="HGNC" id="HGNC:14558">
    <property type="gene designation" value="CLEC7A"/>
</dbReference>
<dbReference type="HPA" id="ENSG00000172243">
    <property type="expression patterns" value="Group enriched (bone marrow, lung, lymphoid tissue)"/>
</dbReference>
<dbReference type="MalaCards" id="CLEC7A"/>
<dbReference type="MIM" id="606264">
    <property type="type" value="gene"/>
</dbReference>
<dbReference type="MIM" id="613108">
    <property type="type" value="phenotype"/>
</dbReference>
<dbReference type="MIM" id="614079">
    <property type="type" value="phenotype"/>
</dbReference>
<dbReference type="neXtProt" id="NX_Q9BXN2"/>
<dbReference type="OpenTargets" id="ENSG00000172243"/>
<dbReference type="Orphanet" id="1334">
    <property type="disease" value="Chronic mucocutaneous candidiasis"/>
</dbReference>
<dbReference type="PharmGKB" id="PA26581"/>
<dbReference type="VEuPathDB" id="HostDB:ENSG00000172243"/>
<dbReference type="eggNOG" id="KOG4297">
    <property type="taxonomic scope" value="Eukaryota"/>
</dbReference>
<dbReference type="GeneTree" id="ENSGT00940000161161"/>
<dbReference type="HOGENOM" id="CLU_049894_8_0_1"/>
<dbReference type="InParanoid" id="Q9BXN2"/>
<dbReference type="OMA" id="NWIIHEK"/>
<dbReference type="OrthoDB" id="2142683at2759"/>
<dbReference type="PAN-GO" id="Q9BXN2">
    <property type="GO annotations" value="14 GO annotations based on evolutionary models"/>
</dbReference>
<dbReference type="PhylomeDB" id="Q9BXN2"/>
<dbReference type="TreeFam" id="TF336674"/>
<dbReference type="PathwayCommons" id="Q9BXN2"/>
<dbReference type="Reactome" id="R-HSA-5607764">
    <property type="pathway name" value="CLEC7A (Dectin-1) signaling"/>
</dbReference>
<dbReference type="SignaLink" id="Q9BXN2"/>
<dbReference type="BioGRID-ORCS" id="64581">
    <property type="hits" value="13 hits in 1139 CRISPR screens"/>
</dbReference>
<dbReference type="GeneWiki" id="CLEC7A"/>
<dbReference type="GenomeRNAi" id="64581"/>
<dbReference type="Pharos" id="Q9BXN2">
    <property type="development level" value="Tbio"/>
</dbReference>
<dbReference type="PRO" id="PR:Q9BXN2"/>
<dbReference type="Proteomes" id="UP000005640">
    <property type="component" value="Chromosome 12"/>
</dbReference>
<dbReference type="RNAct" id="Q9BXN2">
    <property type="molecule type" value="protein"/>
</dbReference>
<dbReference type="Bgee" id="ENSG00000172243">
    <property type="expression patterns" value="Expressed in monocyte and 170 other cell types or tissues"/>
</dbReference>
<dbReference type="ExpressionAtlas" id="Q9BXN2">
    <property type="expression patterns" value="baseline and differential"/>
</dbReference>
<dbReference type="GO" id="GO:0009986">
    <property type="term" value="C:cell surface"/>
    <property type="evidence" value="ECO:0000314"/>
    <property type="project" value="ARUK-UCL"/>
</dbReference>
<dbReference type="GO" id="GO:0005737">
    <property type="term" value="C:cytoplasm"/>
    <property type="evidence" value="ECO:0000314"/>
    <property type="project" value="ARUK-UCL"/>
</dbReference>
<dbReference type="GO" id="GO:0016020">
    <property type="term" value="C:membrane"/>
    <property type="evidence" value="ECO:0000304"/>
    <property type="project" value="UniProtKB"/>
</dbReference>
<dbReference type="GO" id="GO:0005886">
    <property type="term" value="C:plasma membrane"/>
    <property type="evidence" value="ECO:0000314"/>
    <property type="project" value="UniProt"/>
</dbReference>
<dbReference type="GO" id="GO:0001872">
    <property type="term" value="F:(1-&gt;3)-beta-D-glucan binding"/>
    <property type="evidence" value="ECO:0000314"/>
    <property type="project" value="ARUK-UCL"/>
</dbReference>
<dbReference type="GO" id="GO:0030246">
    <property type="term" value="F:carbohydrate binding"/>
    <property type="evidence" value="ECO:0000314"/>
    <property type="project" value="UniProtKB"/>
</dbReference>
<dbReference type="GO" id="GO:0042802">
    <property type="term" value="F:identical protein binding"/>
    <property type="evidence" value="ECO:0000353"/>
    <property type="project" value="IntAct"/>
</dbReference>
<dbReference type="GO" id="GO:0046872">
    <property type="term" value="F:metal ion binding"/>
    <property type="evidence" value="ECO:0007669"/>
    <property type="project" value="UniProtKB-KW"/>
</dbReference>
<dbReference type="GO" id="GO:0042287">
    <property type="term" value="F:MHC protein binding"/>
    <property type="evidence" value="ECO:0000303"/>
    <property type="project" value="UniProtKB"/>
</dbReference>
<dbReference type="GO" id="GO:0038187">
    <property type="term" value="F:pattern recognition receptor activity"/>
    <property type="evidence" value="ECO:0000314"/>
    <property type="project" value="UniProtKB"/>
</dbReference>
<dbReference type="GO" id="GO:0061760">
    <property type="term" value="P:antifungal innate immune response"/>
    <property type="evidence" value="ECO:0000250"/>
    <property type="project" value="UniProtKB"/>
</dbReference>
<dbReference type="GO" id="GO:0097190">
    <property type="term" value="P:apoptotic signaling pathway"/>
    <property type="evidence" value="ECO:0000315"/>
    <property type="project" value="ARUK-UCL"/>
</dbReference>
<dbReference type="GO" id="GO:0009756">
    <property type="term" value="P:carbohydrate mediated signaling"/>
    <property type="evidence" value="ECO:0000304"/>
    <property type="project" value="UniProtKB"/>
</dbReference>
<dbReference type="GO" id="GO:0001775">
    <property type="term" value="P:cell activation"/>
    <property type="evidence" value="ECO:0000250"/>
    <property type="project" value="ARUK-UCL"/>
</dbReference>
<dbReference type="GO" id="GO:0008037">
    <property type="term" value="P:cell recognition"/>
    <property type="evidence" value="ECO:0000314"/>
    <property type="project" value="UniProtKB"/>
</dbReference>
<dbReference type="GO" id="GO:0002752">
    <property type="term" value="P:cell surface pattern recognition receptor signaling pathway"/>
    <property type="evidence" value="ECO:0000314"/>
    <property type="project" value="ARUK-UCL"/>
</dbReference>
<dbReference type="GO" id="GO:0071226">
    <property type="term" value="P:cellular response to molecule of fungal origin"/>
    <property type="evidence" value="ECO:0000314"/>
    <property type="project" value="ARUK-UCL"/>
</dbReference>
<dbReference type="GO" id="GO:0042832">
    <property type="term" value="P:defense response to protozoan"/>
    <property type="evidence" value="ECO:0000303"/>
    <property type="project" value="UniProtKB"/>
</dbReference>
<dbReference type="GO" id="GO:0016046">
    <property type="term" value="P:detection of fungus"/>
    <property type="evidence" value="ECO:0000314"/>
    <property type="project" value="ARUK-UCL"/>
</dbReference>
<dbReference type="GO" id="GO:0032491">
    <property type="term" value="P:detection of molecule of fungal origin"/>
    <property type="evidence" value="ECO:0000314"/>
    <property type="project" value="ARUK-UCL"/>
</dbReference>
<dbReference type="GO" id="GO:0001879">
    <property type="term" value="P:detection of yeast"/>
    <property type="evidence" value="ECO:0000250"/>
    <property type="project" value="ARUK-UCL"/>
</dbReference>
<dbReference type="GO" id="GO:0006954">
    <property type="term" value="P:inflammatory response"/>
    <property type="evidence" value="ECO:0007669"/>
    <property type="project" value="UniProtKB-KW"/>
</dbReference>
<dbReference type="GO" id="GO:0045087">
    <property type="term" value="P:innate immune response"/>
    <property type="evidence" value="ECO:0000318"/>
    <property type="project" value="GO_Central"/>
</dbReference>
<dbReference type="GO" id="GO:0006910">
    <property type="term" value="P:phagocytosis, recognition"/>
    <property type="evidence" value="ECO:0000314"/>
    <property type="project" value="UniProtKB"/>
</dbReference>
<dbReference type="GO" id="GO:0070886">
    <property type="term" value="P:positive regulation of calcineurin-NFAT signaling cascade"/>
    <property type="evidence" value="ECO:0000250"/>
    <property type="project" value="ARUK-UCL"/>
</dbReference>
<dbReference type="GO" id="GO:0050850">
    <property type="term" value="P:positive regulation of calcium-mediated signaling"/>
    <property type="evidence" value="ECO:0000250"/>
    <property type="project" value="ARUK-UCL"/>
</dbReference>
<dbReference type="GO" id="GO:0043123">
    <property type="term" value="P:positive regulation of canonical NF-kappaB signal transduction"/>
    <property type="evidence" value="ECO:0000250"/>
    <property type="project" value="UniProtKB"/>
</dbReference>
<dbReference type="GO" id="GO:1903431">
    <property type="term" value="P:positive regulation of cell maturation"/>
    <property type="evidence" value="ECO:0000314"/>
    <property type="project" value="ARUK-UCL"/>
</dbReference>
<dbReference type="GO" id="GO:0030335">
    <property type="term" value="P:positive regulation of cell migration"/>
    <property type="evidence" value="ECO:0000315"/>
    <property type="project" value="ARUK-UCL"/>
</dbReference>
<dbReference type="GO" id="GO:0008284">
    <property type="term" value="P:positive regulation of cell population proliferation"/>
    <property type="evidence" value="ECO:0000315"/>
    <property type="project" value="ARUK-UCL"/>
</dbReference>
<dbReference type="GO" id="GO:0002720">
    <property type="term" value="P:positive regulation of cytokine production involved in immune response"/>
    <property type="evidence" value="ECO:0000318"/>
    <property type="project" value="GO_Central"/>
</dbReference>
<dbReference type="GO" id="GO:1900017">
    <property type="term" value="P:positive regulation of cytokine production involved in inflammatory response"/>
    <property type="evidence" value="ECO:0000314"/>
    <property type="project" value="ARUK-UCL"/>
</dbReference>
<dbReference type="GO" id="GO:0002732">
    <property type="term" value="P:positive regulation of dendritic cell cytokine production"/>
    <property type="evidence" value="ECO:0000250"/>
    <property type="project" value="ARUK-UCL"/>
</dbReference>
<dbReference type="GO" id="GO:0010628">
    <property type="term" value="P:positive regulation of gene expression"/>
    <property type="evidence" value="ECO:0000314"/>
    <property type="project" value="ARUK-UCL"/>
</dbReference>
<dbReference type="GO" id="GO:0032731">
    <property type="term" value="P:positive regulation of interleukin-1 beta production"/>
    <property type="evidence" value="ECO:0000314"/>
    <property type="project" value="ARUK-UCL"/>
</dbReference>
<dbReference type="GO" id="GO:0032733">
    <property type="term" value="P:positive regulation of interleukin-10 production"/>
    <property type="evidence" value="ECO:0000314"/>
    <property type="project" value="ARUK-UCL"/>
</dbReference>
<dbReference type="GO" id="GO:0032735">
    <property type="term" value="P:positive regulation of interleukin-12 production"/>
    <property type="evidence" value="ECO:0000314"/>
    <property type="project" value="ARUK-UCL"/>
</dbReference>
<dbReference type="GO" id="GO:0032743">
    <property type="term" value="P:positive regulation of interleukin-2 production"/>
    <property type="evidence" value="ECO:0000314"/>
    <property type="project" value="ARUK-UCL"/>
</dbReference>
<dbReference type="GO" id="GO:0032747">
    <property type="term" value="P:positive regulation of interleukin-23 production"/>
    <property type="evidence" value="ECO:0000250"/>
    <property type="project" value="ARUK-UCL"/>
</dbReference>
<dbReference type="GO" id="GO:0032755">
    <property type="term" value="P:positive regulation of interleukin-6 production"/>
    <property type="evidence" value="ECO:0000314"/>
    <property type="project" value="ARUK-UCL"/>
</dbReference>
<dbReference type="GO" id="GO:0032757">
    <property type="term" value="P:positive regulation of interleukin-8 production"/>
    <property type="evidence" value="ECO:0000315"/>
    <property type="project" value="ARUK-UCL"/>
</dbReference>
<dbReference type="GO" id="GO:0051251">
    <property type="term" value="P:positive regulation of lymphocyte activation"/>
    <property type="evidence" value="ECO:0000314"/>
    <property type="project" value="ARUK-UCL"/>
</dbReference>
<dbReference type="GO" id="GO:0043410">
    <property type="term" value="P:positive regulation of MAPK cascade"/>
    <property type="evidence" value="ECO:0000250"/>
    <property type="project" value="ARUK-UCL"/>
</dbReference>
<dbReference type="GO" id="GO:0071639">
    <property type="term" value="P:positive regulation of monocyte chemotactic protein-1 production"/>
    <property type="evidence" value="ECO:0000315"/>
    <property type="project" value="ARUK-UCL"/>
</dbReference>
<dbReference type="GO" id="GO:0045429">
    <property type="term" value="P:positive regulation of nitric oxide biosynthetic process"/>
    <property type="evidence" value="ECO:0000314"/>
    <property type="project" value="ARUK-UCL"/>
</dbReference>
<dbReference type="GO" id="GO:0050766">
    <property type="term" value="P:positive regulation of phagocytosis"/>
    <property type="evidence" value="ECO:0000314"/>
    <property type="project" value="ARUK-UCL"/>
</dbReference>
<dbReference type="GO" id="GO:0031334">
    <property type="term" value="P:positive regulation of protein-containing complex assembly"/>
    <property type="evidence" value="ECO:0000315"/>
    <property type="project" value="ARUK-UCL"/>
</dbReference>
<dbReference type="GO" id="GO:0060267">
    <property type="term" value="P:positive regulation of respiratory burst"/>
    <property type="evidence" value="ECO:0000314"/>
    <property type="project" value="ARUK-UCL"/>
</dbReference>
<dbReference type="GO" id="GO:0032930">
    <property type="term" value="P:positive regulation of superoxide anion generation"/>
    <property type="evidence" value="ECO:0000314"/>
    <property type="project" value="ARUK-UCL"/>
</dbReference>
<dbReference type="GO" id="GO:2000318">
    <property type="term" value="P:positive regulation of T-helper 17 type immune response"/>
    <property type="evidence" value="ECO:0000250"/>
    <property type="project" value="UniProtKB"/>
</dbReference>
<dbReference type="GO" id="GO:0032760">
    <property type="term" value="P:positive regulation of tumor necrosis factor production"/>
    <property type="evidence" value="ECO:0000314"/>
    <property type="project" value="ARUK-UCL"/>
</dbReference>
<dbReference type="GO" id="GO:0032729">
    <property type="term" value="P:positive regulation of type II interferon production"/>
    <property type="evidence" value="ECO:0000314"/>
    <property type="project" value="ARUK-UCL"/>
</dbReference>
<dbReference type="GO" id="GO:0090303">
    <property type="term" value="P:positive regulation of wound healing"/>
    <property type="evidence" value="ECO:0000315"/>
    <property type="project" value="ARUK-UCL"/>
</dbReference>
<dbReference type="GO" id="GO:0070884">
    <property type="term" value="P:regulation of calcineurin-NFAT signaling cascade"/>
    <property type="evidence" value="ECO:0000250"/>
    <property type="project" value="ARUK-UCL"/>
</dbReference>
<dbReference type="GO" id="GO:0043122">
    <property type="term" value="P:regulation of canonical NF-kappaB signal transduction"/>
    <property type="evidence" value="ECO:0000250"/>
    <property type="project" value="ARUK-UCL"/>
</dbReference>
<dbReference type="GO" id="GO:0001878">
    <property type="term" value="P:response to yeast"/>
    <property type="evidence" value="ECO:0000250"/>
    <property type="project" value="ARUK-UCL"/>
</dbReference>
<dbReference type="GO" id="GO:0002223">
    <property type="term" value="P:stimulatory C-type lectin receptor signaling pathway"/>
    <property type="evidence" value="ECO:0000250"/>
    <property type="project" value="ARUK-UCL"/>
</dbReference>
<dbReference type="GO" id="GO:0042110">
    <property type="term" value="P:T cell activation"/>
    <property type="evidence" value="ECO:0000304"/>
    <property type="project" value="UniProtKB"/>
</dbReference>
<dbReference type="CDD" id="cd03593">
    <property type="entry name" value="CLECT_NK_receptors_like"/>
    <property type="match status" value="1"/>
</dbReference>
<dbReference type="FunFam" id="3.10.100.10:FF:000069">
    <property type="entry name" value="C-type lectin domain family 7 member A"/>
    <property type="match status" value="1"/>
</dbReference>
<dbReference type="Gene3D" id="3.10.100.10">
    <property type="entry name" value="Mannose-Binding Protein A, subunit A"/>
    <property type="match status" value="1"/>
</dbReference>
<dbReference type="InterPro" id="IPR001304">
    <property type="entry name" value="C-type_lectin-like"/>
</dbReference>
<dbReference type="InterPro" id="IPR016186">
    <property type="entry name" value="C-type_lectin-like/link_sf"/>
</dbReference>
<dbReference type="InterPro" id="IPR042808">
    <property type="entry name" value="CLEC7A"/>
</dbReference>
<dbReference type="InterPro" id="IPR016187">
    <property type="entry name" value="CTDL_fold"/>
</dbReference>
<dbReference type="InterPro" id="IPR033992">
    <property type="entry name" value="NKR-like_CTLD"/>
</dbReference>
<dbReference type="PANTHER" id="PTHR47218">
    <property type="entry name" value="C-TYPE LECTIN DOMAIN FAMILY 7 MEMBER A"/>
    <property type="match status" value="1"/>
</dbReference>
<dbReference type="PANTHER" id="PTHR47218:SF1">
    <property type="entry name" value="C-TYPE LECTIN DOMAIN FAMILY 7 MEMBER A"/>
    <property type="match status" value="1"/>
</dbReference>
<dbReference type="Pfam" id="PF00059">
    <property type="entry name" value="Lectin_C"/>
    <property type="match status" value="1"/>
</dbReference>
<dbReference type="SMART" id="SM00034">
    <property type="entry name" value="CLECT"/>
    <property type="match status" value="1"/>
</dbReference>
<dbReference type="SUPFAM" id="SSF56436">
    <property type="entry name" value="C-type lectin-like"/>
    <property type="match status" value="1"/>
</dbReference>
<dbReference type="PROSITE" id="PS50041">
    <property type="entry name" value="C_TYPE_LECTIN_2"/>
    <property type="match status" value="1"/>
</dbReference>
<comment type="function">
    <text evidence="1 6 8 11">Lectin that functions as a pattern recognizing receptor (PRR) specific for beta-1,3-linked and beta-1,6-linked glucans, which constitute cell wall constituents from pathogenic bacteria and fungi (PubMed:11567029, PubMed:12423684). Necessary for the TLR2-mediated inflammatory response and activation of NF-kappa-B: upon beta-glucan binding, recruits SYK via its ITAM motif and promotes a signaling cascade that activates some CARD domain-BCL10-MALT1 (CBM) signalosomes, leading to the activation of NF-kappa-B and MAP kinase p38 (MAPK11, MAPK12, MAPK13 and/or MAPK14) pathways which stimulate expression of genes encoding pro-inflammatory cytokines and chemokines (By similarity). Enhances cytokine production in macrophages and dendritic cells (By similarity). Mediates production of reactive oxygen species in the cell (By similarity). Mediates phagocytosis of C.albicans conidia (PubMed:17230442). Binds T-cells in a way that does not involve their surface glycans and plays a role in T-cell activation. Stimulates T-cell proliferation. Induces phosphorylation of SCIMP after binding beta-glucans (By similarity).</text>
</comment>
<comment type="subunit">
    <text evidence="1 10">Homodimer. Interacts with SYK; participates in leukocyte activation in presence of fungal pathogens. Interacts with CD37; this interaction controls CLEC7A-mediated IL-6 production (PubMed:17182550).</text>
</comment>
<comment type="subunit">
    <molecule>Isoform 5</molecule>
    <text evidence="9">Interacts with RANBP9.</text>
</comment>
<comment type="interaction">
    <interactant intactId="EBI-3939278">
        <id>Q9BXN2</id>
    </interactant>
    <interactant intactId="EBI-10303054">
        <id>Q9BZ11-2</id>
        <label>ADAM33</label>
    </interactant>
    <organismsDiffer>false</organismsDiffer>
    <experiments>3</experiments>
</comment>
<comment type="interaction">
    <interactant intactId="EBI-3939278">
        <id>Q9BXN2</id>
    </interactant>
    <interactant intactId="EBI-749464">
        <id>Q12983</id>
        <label>BNIP3</label>
    </interactant>
    <organismsDiffer>false</organismsDiffer>
    <experiments>3</experiments>
</comment>
<comment type="interaction">
    <interactant intactId="EBI-3939278">
        <id>Q9BXN2</id>
    </interactant>
    <interactant intactId="EBI-849893">
        <id>O60238</id>
        <label>BNIP3L</label>
    </interactant>
    <organismsDiffer>false</organismsDiffer>
    <experiments>6</experiments>
</comment>
<comment type="interaction">
    <interactant intactId="EBI-3939278">
        <id>Q9BXN2</id>
    </interactant>
    <interactant intactId="EBI-10298603">
        <id>Q9BU27</id>
        <label>FAM3A</label>
    </interactant>
    <organismsDiffer>false</organismsDiffer>
    <experiments>3</experiments>
</comment>
<comment type="interaction">
    <interactant intactId="EBI-3939278">
        <id>Q9BXN2</id>
    </interactant>
    <interactant intactId="EBI-993762">
        <id>Q01638</id>
        <label>IL1RL1</label>
    </interactant>
    <organismsDiffer>false</organismsDiffer>
    <experiments>3</experiments>
</comment>
<comment type="interaction">
    <interactant intactId="EBI-3939278">
        <id>Q9BXN2</id>
    </interactant>
    <interactant intactId="EBI-10266796">
        <id>Q8N5M9</id>
        <label>JAGN1</label>
    </interactant>
    <organismsDiffer>false</organismsDiffer>
    <experiments>3</experiments>
</comment>
<comment type="interaction">
    <interactant intactId="EBI-3939278">
        <id>Q9BXN2</id>
    </interactant>
    <interactant intactId="EBI-359761">
        <id>Q86UP2</id>
        <label>KTN1</label>
    </interactant>
    <organismsDiffer>false</organismsDiffer>
    <experiments>3</experiments>
</comment>
<comment type="interaction">
    <interactant intactId="EBI-3939278">
        <id>Q9BXN2</id>
    </interactant>
    <interactant intactId="EBI-10317425">
        <id>Q9NZG7</id>
        <label>NINJ2</label>
    </interactant>
    <organismsDiffer>false</organismsDiffer>
    <experiments>3</experiments>
</comment>
<comment type="interaction">
    <interactant intactId="EBI-3939278">
        <id>Q9BXN2</id>
    </interactant>
    <interactant intactId="EBI-2903088">
        <id>Q16625</id>
        <label>OCLN</label>
    </interactant>
    <organismsDiffer>false</organismsDiffer>
    <experiments>3</experiments>
</comment>
<comment type="interaction">
    <interactant intactId="EBI-3939278">
        <id>Q9BXN2</id>
    </interactant>
    <interactant intactId="EBI-3906138">
        <id>P53801</id>
        <label>PTTG1IP</label>
    </interactant>
    <organismsDiffer>false</organismsDiffer>
    <experiments>3</experiments>
</comment>
<comment type="interaction">
    <interactant intactId="EBI-3939278">
        <id>Q9BXN2</id>
    </interactant>
    <interactant intactId="EBI-741850">
        <id>Q9BZL3</id>
        <label>SMIM3</label>
    </interactant>
    <organismsDiffer>false</organismsDiffer>
    <experiments>3</experiments>
</comment>
<comment type="interaction">
    <interactant intactId="EBI-3939278">
        <id>Q9BXN2</id>
    </interactant>
    <interactant intactId="EBI-78302">
        <id>P43405</id>
        <label>SYK</label>
    </interactant>
    <organismsDiffer>false</organismsDiffer>
    <experiments>2</experiments>
</comment>
<comment type="interaction">
    <interactant intactId="EBI-3939278">
        <id>Q9BXN2</id>
    </interactant>
    <interactant intactId="EBI-7131783">
        <id>Q8N205</id>
        <label>SYNE4</label>
    </interactant>
    <organismsDiffer>false</organismsDiffer>
    <experiments>7</experiments>
</comment>
<comment type="interaction">
    <interactant intactId="EBI-3939278">
        <id>Q9BXN2</id>
    </interactant>
    <interactant intactId="EBI-8649725">
        <id>Q9BSE2</id>
        <label>TMEM79</label>
    </interactant>
    <organismsDiffer>false</organismsDiffer>
    <experiments>4</experiments>
</comment>
<comment type="interaction">
    <interactant intactId="EBI-3939278">
        <id>Q9BXN2</id>
    </interactant>
    <interactant intactId="EBI-10312990">
        <id>Q9NRS4-3</id>
        <label>TMPRSS4</label>
    </interactant>
    <organismsDiffer>false</organismsDiffer>
    <experiments>3</experiments>
</comment>
<comment type="interaction">
    <interactant intactId="EBI-3939278">
        <id>Q9BXN2</id>
    </interactant>
    <interactant intactId="EBI-10296986">
        <id>Q9BRL5</id>
    </interactant>
    <organismsDiffer>false</organismsDiffer>
    <experiments>3</experiments>
</comment>
<comment type="interaction">
    <interactant intactId="EBI-11989440">
        <id>Q9BXN2-6</id>
    </interactant>
    <interactant intactId="EBI-10225815">
        <id>Q08AM2</id>
        <label>ADAM33</label>
    </interactant>
    <organismsDiffer>false</organismsDiffer>
    <experiments>3</experiments>
</comment>
<comment type="interaction">
    <interactant intactId="EBI-11989440">
        <id>Q9BXN2-6</id>
    </interactant>
    <interactant intactId="EBI-11343438">
        <id>Q3SXY8</id>
        <label>ARL13B</label>
    </interactant>
    <organismsDiffer>false</organismsDiffer>
    <experiments>3</experiments>
</comment>
<comment type="interaction">
    <interactant intactId="EBI-11989440">
        <id>Q9BXN2-6</id>
    </interactant>
    <interactant intactId="EBI-12808270">
        <id>P07307-3</id>
        <label>ASGR2</label>
    </interactant>
    <organismsDiffer>false</organismsDiffer>
    <experiments>3</experiments>
</comment>
<comment type="interaction">
    <interactant intactId="EBI-11989440">
        <id>Q9BXN2-6</id>
    </interactant>
    <interactant intactId="EBI-749464">
        <id>Q12983</id>
        <label>BNIP3</label>
    </interactant>
    <organismsDiffer>false</organismsDiffer>
    <experiments>3</experiments>
</comment>
<comment type="interaction">
    <interactant intactId="EBI-11989440">
        <id>Q9BXN2-6</id>
    </interactant>
    <interactant intactId="EBI-849893">
        <id>O60238</id>
        <label>BNIP3L</label>
    </interactant>
    <organismsDiffer>false</organismsDiffer>
    <experiments>3</experiments>
</comment>
<comment type="interaction">
    <interactant intactId="EBI-11989440">
        <id>Q9BXN2-6</id>
    </interactant>
    <interactant intactId="EBI-6657396">
        <id>P19397</id>
        <label>CD53</label>
    </interactant>
    <organismsDiffer>false</organismsDiffer>
    <experiments>3</experiments>
</comment>
<comment type="interaction">
    <interactant intactId="EBI-11989440">
        <id>Q9BXN2-6</id>
    </interactant>
    <interactant intactId="EBI-12222807">
        <id>P04233-2</id>
        <label>CD74</label>
    </interactant>
    <organismsDiffer>false</organismsDiffer>
    <experiments>3</experiments>
</comment>
<comment type="interaction">
    <interactant intactId="EBI-11989440">
        <id>Q9BXN2-6</id>
    </interactant>
    <interactant intactId="EBI-11989440">
        <id>Q9BXN2-6</id>
        <label>CLEC7A</label>
    </interactant>
    <organismsDiffer>false</organismsDiffer>
    <experiments>3</experiments>
</comment>
<comment type="interaction">
    <interactant intactId="EBI-11989440">
        <id>Q9BXN2-6</id>
    </interactant>
    <interactant intactId="EBI-12019274">
        <id>Q4LDR2</id>
        <label>CTXN3</label>
    </interactant>
    <organismsDiffer>false</organismsDiffer>
    <experiments>3</experiments>
</comment>
<comment type="interaction">
    <interactant intactId="EBI-11989440">
        <id>Q9BXN2-6</id>
    </interactant>
    <interactant intactId="EBI-3911467">
        <id>Q07325</id>
        <label>CXCL9</label>
    </interactant>
    <organismsDiffer>false</organismsDiffer>
    <experiments>3</experiments>
</comment>
<comment type="interaction">
    <interactant intactId="EBI-11989440">
        <id>Q9BXN2-6</id>
    </interactant>
    <interactant intactId="EBI-2869867">
        <id>P12314</id>
        <label>FCGR1A</label>
    </interactant>
    <organismsDiffer>false</organismsDiffer>
    <experiments>3</experiments>
</comment>
<comment type="interaction">
    <interactant intactId="EBI-11989440">
        <id>Q9BXN2-6</id>
    </interactant>
    <interactant intactId="EBI-12142257">
        <id>Q8TBE3</id>
        <label>FNDC9</label>
    </interactant>
    <organismsDiffer>false</organismsDiffer>
    <experiments>3</experiments>
</comment>
<comment type="interaction">
    <interactant intactId="EBI-11989440">
        <id>Q9BXN2-6</id>
    </interactant>
    <interactant intactId="EBI-17565645">
        <id>P08034</id>
        <label>GJB1</label>
    </interactant>
    <organismsDiffer>false</organismsDiffer>
    <experiments>3</experiments>
</comment>
<comment type="interaction">
    <interactant intactId="EBI-11989440">
        <id>Q9BXN2-6</id>
    </interactant>
    <interactant intactId="EBI-3905457">
        <id>P38484</id>
        <label>IFNGR2</label>
    </interactant>
    <organismsDiffer>false</organismsDiffer>
    <experiments>3</experiments>
</comment>
<comment type="interaction">
    <interactant intactId="EBI-11989440">
        <id>Q9BXN2-6</id>
    </interactant>
    <interactant intactId="EBI-9018187">
        <id>P26715</id>
        <label>KLRC1</label>
    </interactant>
    <organismsDiffer>false</organismsDiffer>
    <experiments>3</experiments>
</comment>
<comment type="interaction">
    <interactant intactId="EBI-11989440">
        <id>Q9BXN2-6</id>
    </interactant>
    <interactant intactId="EBI-3923617">
        <id>Q9H2K0</id>
        <label>MTIF3</label>
    </interactant>
    <organismsDiffer>false</organismsDiffer>
    <experiments>3</experiments>
</comment>
<comment type="interaction">
    <interactant intactId="EBI-11989440">
        <id>Q9BXN2-6</id>
    </interactant>
    <interactant intactId="EBI-10969203">
        <id>O14524-2</id>
        <label>NEMP1</label>
    </interactant>
    <organismsDiffer>false</organismsDiffer>
    <experiments>3</experiments>
</comment>
<comment type="interaction">
    <interactant intactId="EBI-11989440">
        <id>Q9BXN2-6</id>
    </interactant>
    <interactant intactId="EBI-12051377">
        <id>Q8N912</id>
        <label>NRAC</label>
    </interactant>
    <organismsDiffer>false</organismsDiffer>
    <experiments>3</experiments>
</comment>
<comment type="interaction">
    <interactant intactId="EBI-11989440">
        <id>Q9BXN2-6</id>
    </interactant>
    <interactant intactId="EBI-7101695">
        <id>Q9Y328</id>
        <label>NSG2</label>
    </interactant>
    <organismsDiffer>false</organismsDiffer>
    <experiments>3</experiments>
</comment>
<comment type="interaction">
    <interactant intactId="EBI-11989440">
        <id>Q9BXN2-6</id>
    </interactant>
    <interactant intactId="EBI-2804156">
        <id>Q6UX06</id>
        <label>OLFM4</label>
    </interactant>
    <organismsDiffer>false</organismsDiffer>
    <experiments>3</experiments>
</comment>
<comment type="interaction">
    <interactant intactId="EBI-11989440">
        <id>Q9BXN2-6</id>
    </interactant>
    <interactant intactId="EBI-12807478">
        <id>P35372-10</id>
        <label>OPRM1</label>
    </interactant>
    <organismsDiffer>false</organismsDiffer>
    <experiments>3</experiments>
</comment>
<comment type="interaction">
    <interactant intactId="EBI-11989440">
        <id>Q9BXN2-6</id>
    </interactant>
    <interactant intactId="EBI-3906138">
        <id>P53801</id>
        <label>PTTG1IP</label>
    </interactant>
    <organismsDiffer>false</organismsDiffer>
    <experiments>3</experiments>
</comment>
<comment type="interaction">
    <interactant intactId="EBI-11989440">
        <id>Q9BXN2-6</id>
    </interactant>
    <interactant intactId="EBI-3920694">
        <id>Q9NR31</id>
        <label>SAR1A</label>
    </interactant>
    <organismsDiffer>false</organismsDiffer>
    <experiments>3</experiments>
</comment>
<comment type="interaction">
    <interactant intactId="EBI-11989440">
        <id>Q9BXN2-6</id>
    </interactant>
    <interactant intactId="EBI-8652744">
        <id>Q96IW7</id>
        <label>SEC22A</label>
    </interactant>
    <organismsDiffer>false</organismsDiffer>
    <experiments>3</experiments>
</comment>
<comment type="interaction">
    <interactant intactId="EBI-11989440">
        <id>Q9BXN2-6</id>
    </interactant>
    <interactant intactId="EBI-5663627">
        <id>Q16585</id>
        <label>SGCB</label>
    </interactant>
    <organismsDiffer>false</organismsDiffer>
    <experiments>3</experiments>
</comment>
<comment type="interaction">
    <interactant intactId="EBI-11989440">
        <id>Q9BXN2-6</id>
    </interactant>
    <interactant intactId="EBI-741850">
        <id>Q9BZL3</id>
        <label>SMIM3</label>
    </interactant>
    <organismsDiffer>false</organismsDiffer>
    <experiments>4</experiments>
</comment>
<comment type="interaction">
    <interactant intactId="EBI-11989440">
        <id>Q9BXN2-6</id>
    </interactant>
    <interactant intactId="EBI-12078338">
        <id>O43278-2</id>
        <label>SPINT1</label>
    </interactant>
    <organismsDiffer>false</organismsDiffer>
    <experiments>3</experiments>
</comment>
<comment type="interaction">
    <interactant intactId="EBI-11989440">
        <id>Q9BXN2-6</id>
    </interactant>
    <interactant intactId="EBI-18194029">
        <id>Q96L08</id>
        <label>SUSD3</label>
    </interactant>
    <organismsDiffer>false</organismsDiffer>
    <experiments>3</experiments>
</comment>
<comment type="interaction">
    <interactant intactId="EBI-11989440">
        <id>Q9BXN2-6</id>
    </interactant>
    <interactant intactId="EBI-19027521">
        <id>Q8N6K0</id>
        <label>TEX29</label>
    </interactant>
    <organismsDiffer>false</organismsDiffer>
    <experiments>3</experiments>
</comment>
<comment type="interaction">
    <interactant intactId="EBI-11989440">
        <id>Q9BXN2-6</id>
    </interactant>
    <interactant intactId="EBI-12947623">
        <id>Q96MV1</id>
        <label>TLCD4</label>
    </interactant>
    <organismsDiffer>false</organismsDiffer>
    <experiments>3</experiments>
</comment>
<comment type="interaction">
    <interactant intactId="EBI-11989440">
        <id>Q9BXN2-6</id>
    </interactant>
    <interactant intactId="EBI-8649725">
        <id>Q9BSE2</id>
        <label>TMEM79</label>
    </interactant>
    <organismsDiffer>false</organismsDiffer>
    <experiments>3</experiments>
</comment>
<comment type="interaction">
    <interactant intactId="EBI-11989440">
        <id>Q9BXN2-6</id>
    </interactant>
    <interactant intactId="EBI-12345267">
        <id>O15393-2</id>
        <label>TMPRSS2</label>
    </interactant>
    <organismsDiffer>false</organismsDiffer>
    <experiments>3</experiments>
</comment>
<comment type="interaction">
    <interactant intactId="EBI-11989440">
        <id>Q9BXN2-6</id>
    </interactant>
    <interactant intactId="EBI-10179682">
        <id>O00526</id>
        <label>UPK2</label>
    </interactant>
    <organismsDiffer>false</organismsDiffer>
    <experiments>3</experiments>
</comment>
<comment type="interaction">
    <interactant intactId="EBI-11989440">
        <id>Q9BXN2-6</id>
    </interactant>
    <interactant intactId="EBI-744988">
        <id>Q9H7M9</id>
        <label>VSIR</label>
    </interactant>
    <organismsDiffer>false</organismsDiffer>
    <experiments>3</experiments>
</comment>
<comment type="interaction">
    <interactant intactId="EBI-11989440">
        <id>Q9BXN2-6</id>
    </interactant>
    <interactant intactId="EBI-718439">
        <id>O95159</id>
        <label>ZFPL1</label>
    </interactant>
    <organismsDiffer>false</organismsDiffer>
    <experiments>3</experiments>
</comment>
<comment type="subcellular location">
    <subcellularLocation>
        <location evidence="7 9 10 11">Cell membrane</location>
        <topology evidence="7 9 11">Single-pass type II membrane protein</topology>
    </subcellularLocation>
</comment>
<comment type="subcellular location">
    <molecule>Isoform 5</molecule>
    <subcellularLocation>
        <location evidence="22">Cytoplasm</location>
    </subcellularLocation>
</comment>
<comment type="subcellular location">
    <molecule>Isoform 6</molecule>
    <subcellularLocation>
        <location evidence="22">Cytoplasm</location>
    </subcellularLocation>
</comment>
<comment type="subcellular location">
    <molecule>Isoform 7</molecule>
    <subcellularLocation>
        <location evidence="22">Cytoplasm</location>
    </subcellularLocation>
</comment>
<comment type="alternative products">
    <event type="alternative splicing"/>
    <isoform>
        <id>Q9BXN2-1</id>
        <name>1</name>
        <name>A</name>
        <sequence type="displayed"/>
    </isoform>
    <isoform>
        <id>Q9BXN2-2</id>
        <name>2</name>
        <name>Beta</name>
        <name>B</name>
        <sequence type="described" ref="VSP_022051"/>
    </isoform>
    <isoform>
        <id>Q9BXN2-3</id>
        <name>3</name>
        <name>C</name>
        <sequence type="described" ref="VSP_022053 VSP_022056"/>
    </isoform>
    <isoform>
        <id>Q9BXN2-4</id>
        <name>4</name>
        <name>G</name>
        <sequence type="described" ref="VSP_022052 VSP_022057"/>
    </isoform>
    <isoform>
        <id>Q9BXN2-5</id>
        <name>5</name>
        <name>E</name>
        <sequence type="described" ref="VSP_022048"/>
    </isoform>
    <isoform>
        <id>Q9BXN2-6</id>
        <name>6</name>
        <sequence type="described" ref="VSP_022051 VSP_022054 VSP_022055"/>
    </isoform>
    <isoform>
        <id>Q9BXN2-7</id>
        <name>7</name>
        <name>D</name>
        <sequence type="described" ref="VSP_022051 VSP_022053 VSP_022056"/>
    </isoform>
    <isoform>
        <id>Q9BXN2-8</id>
        <name>8</name>
        <name>F</name>
        <sequence type="described" ref="VSP_022049 VSP_022050"/>
    </isoform>
    <isoform>
        <id>Q9BXN2-9</id>
        <name>9</name>
        <sequence type="described" ref="VSP_043298 VSP_043299"/>
    </isoform>
    <isoform>
        <id>Q9BXN2-10</id>
        <name>10</name>
        <sequence type="described" ref="VSP_047589 VSP_047590"/>
    </isoform>
</comment>
<comment type="tissue specificity">
    <text evidence="4 5 6 7 8">Highly expressed in peripheral blood leukocytes and dendritic cells. Detected in spleen, bone marrow, lung, muscle, stomach and placenta.</text>
</comment>
<comment type="induction">
    <text evidence="8">Up-regulated during differentiation from monocytes into dendritic cells.</text>
</comment>
<comment type="PTM">
    <text evidence="1">Phosphorylated on tyrosine residues in response to beta-glucan binding.</text>
</comment>
<comment type="polymorphism">
    <text evidence="13">A stop polymorphism at position 238 may be associated with invasive aspergillosis following hematopoietic stem cell transplantation (PubMed:20807886). The risk is highest when the polymorphism is present in both donors and recipients [MIM:614079] (PubMed:20807886).</text>
</comment>
<comment type="disease" evidence="12">
    <disease id="DI-02808">
        <name>Candidiasis, familial, 4</name>
        <acronym>CANDF4</acronym>
        <description>A primary immunodeficiency disorder with altered immune responses and impaired clearance of fungal infections, selective against Candida. It is characterized by persistent and/or recurrent infections of the skin, nails and mucous membranes caused by organisms of the genus Candida, mainly Candida albicans.</description>
        <dbReference type="MIM" id="613108"/>
    </disease>
    <text>The disease may be caused by variants affecting the gene represented in this entry.</text>
</comment>
<comment type="miscellaneous">
    <molecule>Isoform 2</molecule>
    <text evidence="22">Predominant isoform.</text>
</comment>
<evidence type="ECO:0000250" key="1">
    <source>
        <dbReference type="UniProtKB" id="Q6QLQ4"/>
    </source>
</evidence>
<evidence type="ECO:0000255" key="2"/>
<evidence type="ECO:0000255" key="3">
    <source>
        <dbReference type="PROSITE-ProRule" id="PRU00040"/>
    </source>
</evidence>
<evidence type="ECO:0000269" key="4">
    <source>
    </source>
</evidence>
<evidence type="ECO:0000269" key="5">
    <source>
    </source>
</evidence>
<evidence type="ECO:0000269" key="6">
    <source>
    </source>
</evidence>
<evidence type="ECO:0000269" key="7">
    <source>
    </source>
</evidence>
<evidence type="ECO:0000269" key="8">
    <source>
    </source>
</evidence>
<evidence type="ECO:0000269" key="9">
    <source>
    </source>
</evidence>
<evidence type="ECO:0000269" key="10">
    <source>
    </source>
</evidence>
<evidence type="ECO:0000269" key="11">
    <source>
    </source>
</evidence>
<evidence type="ECO:0000269" key="12">
    <source>
    </source>
</evidence>
<evidence type="ECO:0000269" key="13">
    <source>
    </source>
</evidence>
<evidence type="ECO:0000303" key="14">
    <source>
    </source>
</evidence>
<evidence type="ECO:0000303" key="15">
    <source>
    </source>
</evidence>
<evidence type="ECO:0000303" key="16">
    <source>
    </source>
</evidence>
<evidence type="ECO:0000303" key="17">
    <source>
    </source>
</evidence>
<evidence type="ECO:0000303" key="18">
    <source>
    </source>
</evidence>
<evidence type="ECO:0000303" key="19">
    <source>
    </source>
</evidence>
<evidence type="ECO:0000303" key="20">
    <source>
    </source>
</evidence>
<evidence type="ECO:0000303" key="21">
    <source>
    </source>
</evidence>
<evidence type="ECO:0000305" key="22"/>
<evidence type="ECO:0000312" key="23">
    <source>
        <dbReference type="HGNC" id="HGNC:14558"/>
    </source>
</evidence>
<organism>
    <name type="scientific">Homo sapiens</name>
    <name type="common">Human</name>
    <dbReference type="NCBI Taxonomy" id="9606"/>
    <lineage>
        <taxon>Eukaryota</taxon>
        <taxon>Metazoa</taxon>
        <taxon>Chordata</taxon>
        <taxon>Craniata</taxon>
        <taxon>Vertebrata</taxon>
        <taxon>Euteleostomi</taxon>
        <taxon>Mammalia</taxon>
        <taxon>Eutheria</taxon>
        <taxon>Euarchontoglires</taxon>
        <taxon>Primates</taxon>
        <taxon>Haplorrhini</taxon>
        <taxon>Catarrhini</taxon>
        <taxon>Hominidae</taxon>
        <taxon>Homo</taxon>
    </lineage>
</organism>
<keyword id="KW-0025">Alternative splicing</keyword>
<keyword id="KW-1003">Cell membrane</keyword>
<keyword id="KW-0963">Cytoplasm</keyword>
<keyword id="KW-1015">Disulfide bond</keyword>
<keyword id="KW-0325">Glycoprotein</keyword>
<keyword id="KW-0391">Immunity</keyword>
<keyword id="KW-0395">Inflammatory response</keyword>
<keyword id="KW-0399">Innate immunity</keyword>
<keyword id="KW-0430">Lectin</keyword>
<keyword id="KW-0472">Membrane</keyword>
<keyword id="KW-0479">Metal-binding</keyword>
<keyword id="KW-0597">Phosphoprotein</keyword>
<keyword id="KW-1267">Proteomics identification</keyword>
<keyword id="KW-0675">Receptor</keyword>
<keyword id="KW-1185">Reference proteome</keyword>
<keyword id="KW-0735">Signal-anchor</keyword>
<keyword id="KW-0812">Transmembrane</keyword>
<keyword id="KW-1133">Transmembrane helix</keyword>